<organism>
    <name type="scientific">Arabidopsis thaliana</name>
    <name type="common">Mouse-ear cress</name>
    <dbReference type="NCBI Taxonomy" id="3702"/>
    <lineage>
        <taxon>Eukaryota</taxon>
        <taxon>Viridiplantae</taxon>
        <taxon>Streptophyta</taxon>
        <taxon>Embryophyta</taxon>
        <taxon>Tracheophyta</taxon>
        <taxon>Spermatophyta</taxon>
        <taxon>Magnoliopsida</taxon>
        <taxon>eudicotyledons</taxon>
        <taxon>Gunneridae</taxon>
        <taxon>Pentapetalae</taxon>
        <taxon>rosids</taxon>
        <taxon>malvids</taxon>
        <taxon>Brassicales</taxon>
        <taxon>Brassicaceae</taxon>
        <taxon>Camelineae</taxon>
        <taxon>Arabidopsis</taxon>
    </lineage>
</organism>
<dbReference type="EMBL" id="AC016529">
    <property type="protein sequence ID" value="AAG52573.1"/>
    <property type="molecule type" value="Genomic_DNA"/>
</dbReference>
<dbReference type="EMBL" id="CP002684">
    <property type="protein sequence ID" value="AEE35324.1"/>
    <property type="molecule type" value="Genomic_DNA"/>
</dbReference>
<dbReference type="EMBL" id="BT024564">
    <property type="protein sequence ID" value="ABD38903.1"/>
    <property type="molecule type" value="mRNA"/>
</dbReference>
<dbReference type="EMBL" id="AK227708">
    <property type="protein sequence ID" value="BAE99694.1"/>
    <property type="molecule type" value="mRNA"/>
</dbReference>
<dbReference type="EMBL" id="AY088935">
    <property type="protein sequence ID" value="AAM67240.1"/>
    <property type="molecule type" value="mRNA"/>
</dbReference>
<dbReference type="PIR" id="D96748">
    <property type="entry name" value="D96748"/>
</dbReference>
<dbReference type="RefSeq" id="NP_565042.1">
    <property type="nucleotide sequence ID" value="NM_105902.4"/>
</dbReference>
<dbReference type="SMR" id="Q9C9E1"/>
<dbReference type="FunCoup" id="Q9C9E1">
    <property type="interactions" value="19"/>
</dbReference>
<dbReference type="STRING" id="3702.Q9C9E1"/>
<dbReference type="iPTMnet" id="Q9C9E1"/>
<dbReference type="PaxDb" id="3702-AT1G72430.1"/>
<dbReference type="EnsemblPlants" id="AT1G72430.1">
    <property type="protein sequence ID" value="AT1G72430.1"/>
    <property type="gene ID" value="AT1G72430"/>
</dbReference>
<dbReference type="GeneID" id="843575"/>
<dbReference type="Gramene" id="AT1G72430.1">
    <property type="protein sequence ID" value="AT1G72430.1"/>
    <property type="gene ID" value="AT1G72430"/>
</dbReference>
<dbReference type="KEGG" id="ath:AT1G72430"/>
<dbReference type="Araport" id="AT1G72430"/>
<dbReference type="TAIR" id="AT1G72430">
    <property type="gene designation" value="SAUR78"/>
</dbReference>
<dbReference type="eggNOG" id="ENOG502S116">
    <property type="taxonomic scope" value="Eukaryota"/>
</dbReference>
<dbReference type="HOGENOM" id="CLU_098106_6_2_1"/>
<dbReference type="InParanoid" id="Q9C9E1"/>
<dbReference type="OMA" id="KSAMKKW"/>
<dbReference type="OrthoDB" id="1924524at2759"/>
<dbReference type="PhylomeDB" id="Q9C9E1"/>
<dbReference type="PRO" id="PR:Q9C9E1"/>
<dbReference type="Proteomes" id="UP000006548">
    <property type="component" value="Chromosome 1"/>
</dbReference>
<dbReference type="ExpressionAtlas" id="Q9C9E1">
    <property type="expression patterns" value="baseline and differential"/>
</dbReference>
<dbReference type="GO" id="GO:0071456">
    <property type="term" value="P:cellular response to hypoxia"/>
    <property type="evidence" value="ECO:0007007"/>
    <property type="project" value="TAIR"/>
</dbReference>
<dbReference type="GO" id="GO:0009873">
    <property type="term" value="P:ethylene-activated signaling pathway"/>
    <property type="evidence" value="ECO:0007669"/>
    <property type="project" value="UniProtKB-KW"/>
</dbReference>
<dbReference type="GO" id="GO:0009733">
    <property type="term" value="P:response to auxin"/>
    <property type="evidence" value="ECO:0007669"/>
    <property type="project" value="InterPro"/>
</dbReference>
<dbReference type="InterPro" id="IPR003676">
    <property type="entry name" value="SAUR_fam"/>
</dbReference>
<dbReference type="PANTHER" id="PTHR35296">
    <property type="entry name" value="EXPRESSED PROTEIN"/>
    <property type="match status" value="1"/>
</dbReference>
<dbReference type="PANTHER" id="PTHR35296:SF8">
    <property type="entry name" value="SMALL AUXIN-UP RNA-RELATED"/>
    <property type="match status" value="1"/>
</dbReference>
<dbReference type="Pfam" id="PF02519">
    <property type="entry name" value="Auxin_inducible"/>
    <property type="match status" value="1"/>
</dbReference>
<keyword id="KW-0217">Developmental protein</keyword>
<keyword id="KW-0936">Ethylene signaling pathway</keyword>
<keyword id="KW-0341">Growth regulation</keyword>
<keyword id="KW-1185">Reference proteome</keyword>
<evidence type="ECO:0000269" key="1">
    <source>
    </source>
</evidence>
<evidence type="ECO:0000303" key="2">
    <source>
    </source>
</evidence>
<evidence type="ECO:0000305" key="3"/>
<evidence type="ECO:0000305" key="4">
    <source>
    </source>
</evidence>
<evidence type="ECO:0000305" key="5">
    <source>
    </source>
</evidence>
<evidence type="ECO:0000312" key="6">
    <source>
        <dbReference type="Araport" id="AT1G72430"/>
    </source>
</evidence>
<evidence type="ECO:0000312" key="7">
    <source>
        <dbReference type="EMBL" id="AAG52573.1"/>
    </source>
</evidence>
<proteinExistence type="inferred from homology"/>
<reference key="1">
    <citation type="journal article" date="2000" name="Nature">
        <title>Sequence and analysis of chromosome 1 of the plant Arabidopsis thaliana.</title>
        <authorList>
            <person name="Theologis A."/>
            <person name="Ecker J.R."/>
            <person name="Palm C.J."/>
            <person name="Federspiel N.A."/>
            <person name="Kaul S."/>
            <person name="White O."/>
            <person name="Alonso J."/>
            <person name="Altafi H."/>
            <person name="Araujo R."/>
            <person name="Bowman C.L."/>
            <person name="Brooks S.Y."/>
            <person name="Buehler E."/>
            <person name="Chan A."/>
            <person name="Chao Q."/>
            <person name="Chen H."/>
            <person name="Cheuk R.F."/>
            <person name="Chin C.W."/>
            <person name="Chung M.K."/>
            <person name="Conn L."/>
            <person name="Conway A.B."/>
            <person name="Conway A.R."/>
            <person name="Creasy T.H."/>
            <person name="Dewar K."/>
            <person name="Dunn P."/>
            <person name="Etgu P."/>
            <person name="Feldblyum T.V."/>
            <person name="Feng J.-D."/>
            <person name="Fong B."/>
            <person name="Fujii C.Y."/>
            <person name="Gill J.E."/>
            <person name="Goldsmith A.D."/>
            <person name="Haas B."/>
            <person name="Hansen N.F."/>
            <person name="Hughes B."/>
            <person name="Huizar L."/>
            <person name="Hunter J.L."/>
            <person name="Jenkins J."/>
            <person name="Johnson-Hopson C."/>
            <person name="Khan S."/>
            <person name="Khaykin E."/>
            <person name="Kim C.J."/>
            <person name="Koo H.L."/>
            <person name="Kremenetskaia I."/>
            <person name="Kurtz D.B."/>
            <person name="Kwan A."/>
            <person name="Lam B."/>
            <person name="Langin-Hooper S."/>
            <person name="Lee A."/>
            <person name="Lee J.M."/>
            <person name="Lenz C.A."/>
            <person name="Li J.H."/>
            <person name="Li Y.-P."/>
            <person name="Lin X."/>
            <person name="Liu S.X."/>
            <person name="Liu Z.A."/>
            <person name="Luros J.S."/>
            <person name="Maiti R."/>
            <person name="Marziali A."/>
            <person name="Militscher J."/>
            <person name="Miranda M."/>
            <person name="Nguyen M."/>
            <person name="Nierman W.C."/>
            <person name="Osborne B.I."/>
            <person name="Pai G."/>
            <person name="Peterson J."/>
            <person name="Pham P.K."/>
            <person name="Rizzo M."/>
            <person name="Rooney T."/>
            <person name="Rowley D."/>
            <person name="Sakano H."/>
            <person name="Salzberg S.L."/>
            <person name="Schwartz J.R."/>
            <person name="Shinn P."/>
            <person name="Southwick A.M."/>
            <person name="Sun H."/>
            <person name="Tallon L.J."/>
            <person name="Tambunga G."/>
            <person name="Toriumi M.J."/>
            <person name="Town C.D."/>
            <person name="Utterback T."/>
            <person name="Van Aken S."/>
            <person name="Vaysberg M."/>
            <person name="Vysotskaia V.S."/>
            <person name="Walker M."/>
            <person name="Wu D."/>
            <person name="Yu G."/>
            <person name="Fraser C.M."/>
            <person name="Venter J.C."/>
            <person name="Davis R.W."/>
        </authorList>
    </citation>
    <scope>NUCLEOTIDE SEQUENCE [LARGE SCALE GENOMIC DNA]</scope>
    <source>
        <strain>cv. Columbia</strain>
    </source>
</reference>
<reference key="2">
    <citation type="journal article" date="2017" name="Plant J.">
        <title>Araport11: a complete reannotation of the Arabidopsis thaliana reference genome.</title>
        <authorList>
            <person name="Cheng C.Y."/>
            <person name="Krishnakumar V."/>
            <person name="Chan A.P."/>
            <person name="Thibaud-Nissen F."/>
            <person name="Schobel S."/>
            <person name="Town C.D."/>
        </authorList>
    </citation>
    <scope>GENOME REANNOTATION</scope>
    <source>
        <strain>cv. Columbia</strain>
    </source>
</reference>
<reference key="3">
    <citation type="submission" date="2006-02" db="EMBL/GenBank/DDBJ databases">
        <title>Arabidopsis ORF clones.</title>
        <authorList>
            <person name="Shinn P."/>
            <person name="Chen H."/>
            <person name="Kim C.J."/>
            <person name="Ecker J.R."/>
        </authorList>
    </citation>
    <scope>NUCLEOTIDE SEQUENCE [LARGE SCALE MRNA]</scope>
    <source>
        <strain>cv. Columbia</strain>
    </source>
</reference>
<reference key="4">
    <citation type="submission" date="2006-07" db="EMBL/GenBank/DDBJ databases">
        <title>Large-scale analysis of RIKEN Arabidopsis full-length (RAFL) cDNAs.</title>
        <authorList>
            <person name="Totoki Y."/>
            <person name="Seki M."/>
            <person name="Ishida J."/>
            <person name="Nakajima M."/>
            <person name="Enju A."/>
            <person name="Kamiya A."/>
            <person name="Narusaka M."/>
            <person name="Shin-i T."/>
            <person name="Nakagawa M."/>
            <person name="Sakamoto N."/>
            <person name="Oishi K."/>
            <person name="Kohara Y."/>
            <person name="Kobayashi M."/>
            <person name="Toyoda A."/>
            <person name="Sakaki Y."/>
            <person name="Sakurai T."/>
            <person name="Iida K."/>
            <person name="Akiyama K."/>
            <person name="Satou M."/>
            <person name="Toyoda T."/>
            <person name="Konagaya A."/>
            <person name="Carninci P."/>
            <person name="Kawai J."/>
            <person name="Hayashizaki Y."/>
            <person name="Shinozaki K."/>
        </authorList>
    </citation>
    <scope>NUCLEOTIDE SEQUENCE [LARGE SCALE MRNA]</scope>
    <source>
        <strain>cv. Columbia</strain>
    </source>
</reference>
<reference key="5">
    <citation type="submission" date="2002-03" db="EMBL/GenBank/DDBJ databases">
        <title>Full-length cDNA from Arabidopsis thaliana.</title>
        <authorList>
            <person name="Brover V.V."/>
            <person name="Troukhan M.E."/>
            <person name="Alexandrov N.A."/>
            <person name="Lu Y.-P."/>
            <person name="Flavell R.B."/>
            <person name="Feldmann K.A."/>
        </authorList>
    </citation>
    <scope>NUCLEOTIDE SEQUENCE [LARGE SCALE MRNA]</scope>
</reference>
<reference key="6">
    <citation type="journal article" date="2015" name="Sci. Rep.">
        <title>Three SAUR proteins SAUR76, SAUR77 and SAUR78 promote plant growth in Arabidopsis.</title>
        <authorList>
            <person name="Li Z.G."/>
            <person name="Chen H.W."/>
            <person name="Li Q.T."/>
            <person name="Tao J.J."/>
            <person name="Bian X.H."/>
            <person name="Ma B."/>
            <person name="Zhang W.K."/>
            <person name="Chen S.Y."/>
            <person name="Zhang J.S."/>
        </authorList>
    </citation>
    <scope>FUNCTION</scope>
    <scope>RETRACTED PAPER</scope>
</reference>
<reference key="7">
    <citation type="journal article" date="2022" name="Sci. Rep.">
        <authorList>
            <person name="Li Z.G."/>
            <person name="Chen H.W."/>
            <person name="Li Q.T."/>
            <person name="Tao J.J."/>
            <person name="Bian X.H."/>
            <person name="Ma B."/>
            <person name="Zhang W.K."/>
            <person name="Chen S.Y."/>
            <person name="Zhang J.S."/>
        </authorList>
    </citation>
    <scope>RETRACTION NOTICE OF PUBMED:26207341</scope>
</reference>
<protein>
    <recommendedName>
        <fullName evidence="3">Auxin-responsive protein SAUR78</fullName>
    </recommendedName>
    <alternativeName>
        <fullName evidence="2">Protein SMALL AUXIN UP RNA 78</fullName>
    </alternativeName>
</protein>
<feature type="chain" id="PRO_0000444009" description="Auxin-responsive protein SAUR78">
    <location>
        <begin position="1"/>
        <end position="119"/>
    </location>
</feature>
<feature type="sequence conflict" description="In Ref. 4; BAE99694." evidence="3" ref="4">
    <original>G</original>
    <variation>R</variation>
    <location>
        <position position="108"/>
    </location>
</feature>
<name>SAU78_ARATH</name>
<comment type="function">
    <text evidence="4">May be involved in the regulation of ethylene receptor signaling. Promotes cell expansion and plant growth.</text>
</comment>
<comment type="miscellaneous">
    <text evidence="1">Plants silencing SAUR78 exhibit increased sensitivity to ethylene, while plants over-expressing SAUR78 display reduced ethylene sensitivity. Plants over-expressing SAUR78 exhibit increased rosette diameters.</text>
</comment>
<comment type="similarity">
    <text evidence="3">Belongs to the ARG7 family.</text>
</comment>
<comment type="caution">
    <text evidence="5">The article by Li et al was retracted by the editors after publication. Concerns were raised regarding a number of figure panels, such as partial overlap between the panels and duplication of protein gel analysis.</text>
</comment>
<gene>
    <name evidence="2" type="primary">SAUR78</name>
    <name evidence="6" type="ordered locus">At1g72430</name>
    <name evidence="7" type="ORF">T10D10.10</name>
</gene>
<sequence length="119" mass="13591">MAKVGKLTKLKSAMKKWPSFAKNHHHSTSSAAVSDELSEDNNLHVVYVGQTRRPYMLRPDIISHPLFQELVDRSSSRSIEQDREIVVACEVVLFEHLLWMLKSGQEGGSVEELAEFYTY</sequence>
<accession>Q9C9E1</accession>
<accession>Q0WT54</accession>